<reference key="1">
    <citation type="submission" date="2006-06" db="EMBL/GenBank/DDBJ databases">
        <title>Complete sequence of chromosome of Mycobacterium sp. MCS.</title>
        <authorList>
            <consortium name="US DOE Joint Genome Institute"/>
            <person name="Copeland A."/>
            <person name="Lucas S."/>
            <person name="Lapidus A."/>
            <person name="Barry K."/>
            <person name="Detter J.C."/>
            <person name="Glavina del Rio T."/>
            <person name="Hammon N."/>
            <person name="Israni S."/>
            <person name="Dalin E."/>
            <person name="Tice H."/>
            <person name="Pitluck S."/>
            <person name="Martinez M."/>
            <person name="Schmutz J."/>
            <person name="Larimer F."/>
            <person name="Land M."/>
            <person name="Hauser L."/>
            <person name="Kyrpides N."/>
            <person name="Kim E."/>
            <person name="Miller C.D."/>
            <person name="Hughes J.E."/>
            <person name="Anderson A.J."/>
            <person name="Sims R.C."/>
            <person name="Richardson P."/>
        </authorList>
    </citation>
    <scope>NUCLEOTIDE SEQUENCE [LARGE SCALE GENOMIC DNA]</scope>
    <source>
        <strain>MCS</strain>
    </source>
</reference>
<dbReference type="EMBL" id="CP000384">
    <property type="protein sequence ID" value="ABG09087.1"/>
    <property type="molecule type" value="Genomic_DNA"/>
</dbReference>
<dbReference type="SMR" id="Q1B7P7"/>
<dbReference type="KEGG" id="mmc:Mmcs_2980"/>
<dbReference type="HOGENOM" id="CLU_169643_4_2_11"/>
<dbReference type="BioCyc" id="MSP164756:G1G6O-3040-MONOMER"/>
<dbReference type="GO" id="GO:0022625">
    <property type="term" value="C:cytosolic large ribosomal subunit"/>
    <property type="evidence" value="ECO:0007669"/>
    <property type="project" value="TreeGrafter"/>
</dbReference>
<dbReference type="GO" id="GO:0003735">
    <property type="term" value="F:structural constituent of ribosome"/>
    <property type="evidence" value="ECO:0007669"/>
    <property type="project" value="InterPro"/>
</dbReference>
<dbReference type="GO" id="GO:0006412">
    <property type="term" value="P:translation"/>
    <property type="evidence" value="ECO:0007669"/>
    <property type="project" value="UniProtKB-UniRule"/>
</dbReference>
<dbReference type="FunFam" id="4.10.410.60:FF:000001">
    <property type="entry name" value="50S ribosomal protein L35"/>
    <property type="match status" value="1"/>
</dbReference>
<dbReference type="Gene3D" id="4.10.410.60">
    <property type="match status" value="1"/>
</dbReference>
<dbReference type="HAMAP" id="MF_00514">
    <property type="entry name" value="Ribosomal_bL35"/>
    <property type="match status" value="1"/>
</dbReference>
<dbReference type="InterPro" id="IPR001706">
    <property type="entry name" value="Ribosomal_bL35"/>
</dbReference>
<dbReference type="InterPro" id="IPR021137">
    <property type="entry name" value="Ribosomal_bL35-like"/>
</dbReference>
<dbReference type="InterPro" id="IPR018265">
    <property type="entry name" value="Ribosomal_bL35_CS"/>
</dbReference>
<dbReference type="InterPro" id="IPR037229">
    <property type="entry name" value="Ribosomal_bL35_sf"/>
</dbReference>
<dbReference type="NCBIfam" id="TIGR00001">
    <property type="entry name" value="rpmI_bact"/>
    <property type="match status" value="1"/>
</dbReference>
<dbReference type="PANTHER" id="PTHR33343">
    <property type="entry name" value="54S RIBOSOMAL PROTEIN BL35M"/>
    <property type="match status" value="1"/>
</dbReference>
<dbReference type="PANTHER" id="PTHR33343:SF1">
    <property type="entry name" value="LARGE RIBOSOMAL SUBUNIT PROTEIN BL35M"/>
    <property type="match status" value="1"/>
</dbReference>
<dbReference type="Pfam" id="PF01632">
    <property type="entry name" value="Ribosomal_L35p"/>
    <property type="match status" value="1"/>
</dbReference>
<dbReference type="PRINTS" id="PR00064">
    <property type="entry name" value="RIBOSOMALL35"/>
</dbReference>
<dbReference type="SUPFAM" id="SSF143034">
    <property type="entry name" value="L35p-like"/>
    <property type="match status" value="1"/>
</dbReference>
<dbReference type="PROSITE" id="PS00936">
    <property type="entry name" value="RIBOSOMAL_L35"/>
    <property type="match status" value="1"/>
</dbReference>
<organism>
    <name type="scientific">Mycobacterium sp. (strain MCS)</name>
    <dbReference type="NCBI Taxonomy" id="164756"/>
    <lineage>
        <taxon>Bacteria</taxon>
        <taxon>Bacillati</taxon>
        <taxon>Actinomycetota</taxon>
        <taxon>Actinomycetes</taxon>
        <taxon>Mycobacteriales</taxon>
        <taxon>Mycobacteriaceae</taxon>
        <taxon>Mycobacterium</taxon>
    </lineage>
</organism>
<sequence>MPKAKTHSGASKRFRRTGTGKIVRQKANRRHLMEHKPTKRTRRLAGRTQVSANDAPRINKMLNG</sequence>
<keyword id="KW-0687">Ribonucleoprotein</keyword>
<keyword id="KW-0689">Ribosomal protein</keyword>
<gene>
    <name evidence="1" type="primary">rpmI</name>
    <name type="ordered locus">Mmcs_2980</name>
</gene>
<name>RL35_MYCSS</name>
<proteinExistence type="inferred from homology"/>
<feature type="chain" id="PRO_1000050722" description="Large ribosomal subunit protein bL35">
    <location>
        <begin position="1"/>
        <end position="64"/>
    </location>
</feature>
<feature type="region of interest" description="Disordered" evidence="2">
    <location>
        <begin position="1"/>
        <end position="20"/>
    </location>
</feature>
<feature type="region of interest" description="Disordered" evidence="2">
    <location>
        <begin position="37"/>
        <end position="64"/>
    </location>
</feature>
<evidence type="ECO:0000255" key="1">
    <source>
        <dbReference type="HAMAP-Rule" id="MF_00514"/>
    </source>
</evidence>
<evidence type="ECO:0000256" key="2">
    <source>
        <dbReference type="SAM" id="MobiDB-lite"/>
    </source>
</evidence>
<evidence type="ECO:0000305" key="3"/>
<comment type="similarity">
    <text evidence="1">Belongs to the bacterial ribosomal protein bL35 family.</text>
</comment>
<accession>Q1B7P7</accession>
<protein>
    <recommendedName>
        <fullName evidence="1">Large ribosomal subunit protein bL35</fullName>
    </recommendedName>
    <alternativeName>
        <fullName evidence="3">50S ribosomal protein L35</fullName>
    </alternativeName>
</protein>